<gene>
    <name evidence="5" type="primary">aegA</name>
    <name type="synonym">yffG</name>
    <name type="ordered locus">b2468</name>
    <name type="ordered locus">JW2452</name>
</gene>
<accession>P37127</accession>
<accession>P76560</accession>
<accession>P76970</accession>
<feature type="chain" id="PRO_0000170801" description="Putative oxidoreductase AegA">
    <location>
        <begin position="1"/>
        <end position="659"/>
    </location>
</feature>
<feature type="domain" description="4Fe-4S ferredoxin-type 1" evidence="2">
    <location>
        <begin position="3"/>
        <end position="22"/>
    </location>
</feature>
<feature type="domain" description="4Fe-4S ferredoxin-type 2" evidence="2">
    <location>
        <begin position="47"/>
        <end position="77"/>
    </location>
</feature>
<feature type="domain" description="4Fe-4S ferredoxin-type 3" evidence="2">
    <location>
        <begin position="78"/>
        <end position="107"/>
    </location>
</feature>
<feature type="domain" description="4Fe-4S ferredoxin-type 4" evidence="2">
    <location>
        <begin position="114"/>
        <end position="147"/>
    </location>
</feature>
<feature type="domain" description="4Fe-4S ferredoxin-type 5" evidence="2">
    <location>
        <begin position="218"/>
        <end position="252"/>
    </location>
</feature>
<feature type="binding site" evidence="1">
    <location>
        <position position="12"/>
    </location>
    <ligand>
        <name>[4Fe-4S] cluster</name>
        <dbReference type="ChEBI" id="CHEBI:49883"/>
        <label>1</label>
    </ligand>
</feature>
<feature type="binding site" evidence="1">
    <location>
        <position position="15"/>
    </location>
    <ligand>
        <name>[4Fe-4S] cluster</name>
        <dbReference type="ChEBI" id="CHEBI:49883"/>
        <label>1</label>
    </ligand>
</feature>
<feature type="binding site" evidence="1">
    <location>
        <position position="18"/>
    </location>
    <ligand>
        <name>[4Fe-4S] cluster</name>
        <dbReference type="ChEBI" id="CHEBI:49883"/>
        <label>1</label>
    </ligand>
</feature>
<feature type="binding site" evidence="1">
    <location>
        <position position="22"/>
    </location>
    <ligand>
        <name>[4Fe-4S] cluster</name>
        <dbReference type="ChEBI" id="CHEBI:49883"/>
        <label>2</label>
    </ligand>
</feature>
<feature type="binding site" evidence="1">
    <location>
        <position position="56"/>
    </location>
    <ligand>
        <name>[4Fe-4S] cluster</name>
        <dbReference type="ChEBI" id="CHEBI:49883"/>
        <label>3</label>
    </ligand>
</feature>
<feature type="binding site" evidence="1">
    <location>
        <position position="59"/>
    </location>
    <ligand>
        <name>[4Fe-4S] cluster</name>
        <dbReference type="ChEBI" id="CHEBI:49883"/>
        <label>3</label>
    </ligand>
</feature>
<feature type="binding site" evidence="1">
    <location>
        <position position="64"/>
    </location>
    <ligand>
        <name>[4Fe-4S] cluster</name>
        <dbReference type="ChEBI" id="CHEBI:49883"/>
        <label>3</label>
    </ligand>
</feature>
<feature type="binding site" evidence="1">
    <location>
        <position position="68"/>
    </location>
    <ligand>
        <name>[4Fe-4S] cluster</name>
        <dbReference type="ChEBI" id="CHEBI:49883"/>
        <label>4</label>
    </ligand>
</feature>
<feature type="binding site" evidence="1">
    <location>
        <position position="87"/>
    </location>
    <ligand>
        <name>[4Fe-4S] cluster</name>
        <dbReference type="ChEBI" id="CHEBI:49883"/>
        <label>4</label>
    </ligand>
</feature>
<feature type="binding site" evidence="1">
    <location>
        <position position="90"/>
    </location>
    <ligand>
        <name>[4Fe-4S] cluster</name>
        <dbReference type="ChEBI" id="CHEBI:49883"/>
        <label>4</label>
    </ligand>
</feature>
<feature type="binding site" evidence="1">
    <location>
        <position position="93"/>
    </location>
    <ligand>
        <name>[4Fe-4S] cluster</name>
        <dbReference type="ChEBI" id="CHEBI:49883"/>
        <label>4</label>
    </ligand>
</feature>
<feature type="binding site" evidence="1">
    <location>
        <position position="97"/>
    </location>
    <ligand>
        <name>[4Fe-4S] cluster</name>
        <dbReference type="ChEBI" id="CHEBI:49883"/>
        <label>3</label>
    </ligand>
</feature>
<feature type="binding site" evidence="1">
    <location>
        <position position="121"/>
    </location>
    <ligand>
        <name>[4Fe-4S] cluster</name>
        <dbReference type="ChEBI" id="CHEBI:49883"/>
        <label>2</label>
    </ligand>
</feature>
<feature type="binding site" evidence="1">
    <location>
        <position position="124"/>
    </location>
    <ligand>
        <name>[4Fe-4S] cluster</name>
        <dbReference type="ChEBI" id="CHEBI:49883"/>
        <label>2</label>
    </ligand>
</feature>
<feature type="binding site" evidence="1">
    <location>
        <position position="133"/>
    </location>
    <ligand>
        <name>[4Fe-4S] cluster</name>
        <dbReference type="ChEBI" id="CHEBI:49883"/>
        <label>2</label>
    </ligand>
</feature>
<feature type="binding site" evidence="1">
    <location>
        <position position="137"/>
    </location>
    <ligand>
        <name>[4Fe-4S] cluster</name>
        <dbReference type="ChEBI" id="CHEBI:49883"/>
        <label>1</label>
    </ligand>
</feature>
<feature type="binding site" evidence="2">
    <location>
        <position position="227"/>
    </location>
    <ligand>
        <name>[4Fe-4S] cluster</name>
        <dbReference type="ChEBI" id="CHEBI:49883"/>
        <label>5</label>
    </ligand>
</feature>
<feature type="binding site" evidence="2">
    <location>
        <position position="230"/>
    </location>
    <ligand>
        <name>[4Fe-4S] cluster</name>
        <dbReference type="ChEBI" id="CHEBI:49883"/>
        <label>5</label>
    </ligand>
</feature>
<feature type="binding site" evidence="2">
    <location>
        <position position="236"/>
    </location>
    <ligand>
        <name>[4Fe-4S] cluster</name>
        <dbReference type="ChEBI" id="CHEBI:49883"/>
        <label>5</label>
    </ligand>
</feature>
<feature type="binding site" evidence="2">
    <location>
        <position position="240"/>
    </location>
    <ligand>
        <name>[4Fe-4S] cluster</name>
        <dbReference type="ChEBI" id="CHEBI:49883"/>
        <label>5</label>
    </ligand>
</feature>
<feature type="sequence conflict" description="In Ref. 1; AAB46944." evidence="6" ref="1">
    <original>L</original>
    <variation>R</variation>
    <location>
        <position position="488"/>
    </location>
</feature>
<feature type="sequence conflict" description="In Ref. 1; AAB46944." evidence="6" ref="1">
    <original>V</original>
    <variation>A</variation>
    <location>
        <position position="513"/>
    </location>
</feature>
<feature type="sequence conflict" description="In Ref. 1." evidence="6" ref="1">
    <original>W</original>
    <variation>M</variation>
    <location>
        <position position="600"/>
    </location>
</feature>
<sequence length="659" mass="71844">MNRFIMANSQQCLGCHACEIACVMAHNDEQHVLSQHHFHPRITVIKHQQQRSAVTCHHCEDAPCARSCPNGAISHVDDSIQVNQQKCIGCKSCVVACPFGTMQIVLTPVAAGKVKATAHKCDLCAGRENGPACVENCPADALQLVTDVALSGMAKSRRLRTARQEHQPWHASTAAQEMPVMSKVEQMQATPARGEPDKLAIEARKTGFDEIYLPFRADQAQREASRCLKCGEHSVCEWTCPLHNHIPQWIELVKAGNIDAAVELSHQTNTLPEITGRVCPQDRLCEGACTIRDEHGAVTIGNIERYISDQALAKGWRPDLSHVTKVDKRVAIIGAGPAGLACADVLTRNGVGVTVYDRHPEIGGLLTFGIPSFKLDKSLLARRREIFSAMGIHFELNCEVGKDVSLDSLLEQYDAVFVGVGTYRSMKAGLPNEDAPGVYDALPFLIANTKQVMGLEELPEEPFINTAGLNVVVLGGGDTAMDCVRTALRHGASNVTCAYRRDEANMPGSKKEVKNAREEGANFEFNVQPVALELNEQGHVCGIRFLRTRLGEPDAQGRRRPVPVEGSEFVMPADAVIMAFGFNPHGMPWLESHGVTVDKWGRIIADVESQYRYQTTNPKIFAGGDAVRGADLVVTAMAEGRHAAQGIIDWLGVKSVKSH</sequence>
<dbReference type="EMBL" id="L34011">
    <property type="protein sequence ID" value="AAB46944.1"/>
    <property type="status" value="ALT_FRAME"/>
    <property type="molecule type" value="Genomic_DNA"/>
</dbReference>
<dbReference type="EMBL" id="U00096">
    <property type="protein sequence ID" value="AAC75521.1"/>
    <property type="molecule type" value="Genomic_DNA"/>
</dbReference>
<dbReference type="EMBL" id="AP009048">
    <property type="protein sequence ID" value="BAA16342.2"/>
    <property type="molecule type" value="Genomic_DNA"/>
</dbReference>
<dbReference type="PIR" id="C65022">
    <property type="entry name" value="C65022"/>
</dbReference>
<dbReference type="RefSeq" id="NP_416963.1">
    <property type="nucleotide sequence ID" value="NC_000913.3"/>
</dbReference>
<dbReference type="RefSeq" id="WP_001078880.1">
    <property type="nucleotide sequence ID" value="NZ_LN832404.1"/>
</dbReference>
<dbReference type="SMR" id="P37127"/>
<dbReference type="BioGRID" id="4260929">
    <property type="interactions" value="15"/>
</dbReference>
<dbReference type="DIP" id="DIP-9060N"/>
<dbReference type="FunCoup" id="P37127">
    <property type="interactions" value="417"/>
</dbReference>
<dbReference type="IntAct" id="P37127">
    <property type="interactions" value="6"/>
</dbReference>
<dbReference type="STRING" id="511145.b2468"/>
<dbReference type="jPOST" id="P37127"/>
<dbReference type="PaxDb" id="511145-b2468"/>
<dbReference type="EnsemblBacteria" id="AAC75521">
    <property type="protein sequence ID" value="AAC75521"/>
    <property type="gene ID" value="b2468"/>
</dbReference>
<dbReference type="GeneID" id="947383"/>
<dbReference type="KEGG" id="ecj:JW2452"/>
<dbReference type="KEGG" id="eco:b2468"/>
<dbReference type="KEGG" id="ecoc:C3026_13690"/>
<dbReference type="PATRIC" id="fig|1411691.4.peg.4272"/>
<dbReference type="EchoBASE" id="EB2308"/>
<dbReference type="eggNOG" id="COG0493">
    <property type="taxonomic scope" value="Bacteria"/>
</dbReference>
<dbReference type="eggNOG" id="COG1142">
    <property type="taxonomic scope" value="Bacteria"/>
</dbReference>
<dbReference type="HOGENOM" id="CLU_000422_3_3_6"/>
<dbReference type="InParanoid" id="P37127"/>
<dbReference type="OMA" id="QRYATDW"/>
<dbReference type="OrthoDB" id="9803192at2"/>
<dbReference type="PhylomeDB" id="P37127"/>
<dbReference type="BioCyc" id="EcoCyc:EG12409-MONOMER"/>
<dbReference type="PRO" id="PR:P37127"/>
<dbReference type="Proteomes" id="UP000000625">
    <property type="component" value="Chromosome"/>
</dbReference>
<dbReference type="GO" id="GO:0051539">
    <property type="term" value="F:4 iron, 4 sulfur cluster binding"/>
    <property type="evidence" value="ECO:0007669"/>
    <property type="project" value="UniProtKB-KW"/>
</dbReference>
<dbReference type="GO" id="GO:0046872">
    <property type="term" value="F:metal ion binding"/>
    <property type="evidence" value="ECO:0007669"/>
    <property type="project" value="UniProtKB-KW"/>
</dbReference>
<dbReference type="GO" id="GO:0016491">
    <property type="term" value="F:oxidoreductase activity"/>
    <property type="evidence" value="ECO:0007669"/>
    <property type="project" value="UniProtKB-KW"/>
</dbReference>
<dbReference type="GO" id="GO:0019628">
    <property type="term" value="P:urate catabolic process"/>
    <property type="evidence" value="ECO:0000316"/>
    <property type="project" value="EcoCyc"/>
</dbReference>
<dbReference type="CDD" id="cd10554">
    <property type="entry name" value="HycB_like"/>
    <property type="match status" value="1"/>
</dbReference>
<dbReference type="FunFam" id="3.50.50.60:FF:000068">
    <property type="entry name" value="Glutamate synthase small subunit"/>
    <property type="match status" value="1"/>
</dbReference>
<dbReference type="FunFam" id="3.50.50.60:FF:000077">
    <property type="entry name" value="Glutamate synthase small subunit"/>
    <property type="match status" value="1"/>
</dbReference>
<dbReference type="Gene3D" id="3.30.70.20">
    <property type="match status" value="2"/>
</dbReference>
<dbReference type="Gene3D" id="1.10.1060.10">
    <property type="entry name" value="Alpha-helical ferredoxin"/>
    <property type="match status" value="1"/>
</dbReference>
<dbReference type="Gene3D" id="3.50.50.60">
    <property type="entry name" value="FAD/NAD(P)-binding domain"/>
    <property type="match status" value="3"/>
</dbReference>
<dbReference type="InterPro" id="IPR017896">
    <property type="entry name" value="4Fe4S_Fe-S-bd"/>
</dbReference>
<dbReference type="InterPro" id="IPR017900">
    <property type="entry name" value="4Fe4S_Fe_S_CS"/>
</dbReference>
<dbReference type="InterPro" id="IPR028261">
    <property type="entry name" value="DPD_II"/>
</dbReference>
<dbReference type="InterPro" id="IPR036188">
    <property type="entry name" value="FAD/NAD-bd_sf"/>
</dbReference>
<dbReference type="InterPro" id="IPR023753">
    <property type="entry name" value="FAD/NAD-binding_dom"/>
</dbReference>
<dbReference type="InterPro" id="IPR006006">
    <property type="entry name" value="GltD-like"/>
</dbReference>
<dbReference type="InterPro" id="IPR009051">
    <property type="entry name" value="Helical_ferredxn"/>
</dbReference>
<dbReference type="NCBIfam" id="TIGR01318">
    <property type="entry name" value="gltD_gamma_fam"/>
    <property type="match status" value="1"/>
</dbReference>
<dbReference type="NCBIfam" id="NF009408">
    <property type="entry name" value="PRK12769.1"/>
    <property type="match status" value="1"/>
</dbReference>
<dbReference type="PANTHER" id="PTHR42783">
    <property type="entry name" value="GLUTAMATE SYNTHASE [NADPH] SMALL CHAIN"/>
    <property type="match status" value="1"/>
</dbReference>
<dbReference type="PANTHER" id="PTHR42783:SF1">
    <property type="entry name" value="OXIDOREDUCTASE AEGA-RELATED"/>
    <property type="match status" value="1"/>
</dbReference>
<dbReference type="Pfam" id="PF13247">
    <property type="entry name" value="Fer4_11"/>
    <property type="match status" value="1"/>
</dbReference>
<dbReference type="Pfam" id="PF14691">
    <property type="entry name" value="Fer4_20"/>
    <property type="match status" value="1"/>
</dbReference>
<dbReference type="Pfam" id="PF07992">
    <property type="entry name" value="Pyr_redox_2"/>
    <property type="match status" value="1"/>
</dbReference>
<dbReference type="PRINTS" id="PR00419">
    <property type="entry name" value="ADXRDTASE"/>
</dbReference>
<dbReference type="SUPFAM" id="SSF54862">
    <property type="entry name" value="4Fe-4S ferredoxins"/>
    <property type="match status" value="1"/>
</dbReference>
<dbReference type="SUPFAM" id="SSF51971">
    <property type="entry name" value="Nucleotide-binding domain"/>
    <property type="match status" value="1"/>
</dbReference>
<dbReference type="PROSITE" id="PS00198">
    <property type="entry name" value="4FE4S_FER_1"/>
    <property type="match status" value="1"/>
</dbReference>
<dbReference type="PROSITE" id="PS51379">
    <property type="entry name" value="4FE4S_FER_2"/>
    <property type="match status" value="5"/>
</dbReference>
<comment type="function">
    <text evidence="3">Involved in formate-dependent uric acid degradation under microaerobic and anaerobic conditions. May reduce the enzymes necessary for uric acid degradation.</text>
</comment>
<comment type="cofactor">
    <cofactor evidence="1">
        <name>[4Fe-4S] cluster</name>
        <dbReference type="ChEBI" id="CHEBI:49883"/>
    </cofactor>
    <text evidence="1 2">Binds 5 [4Fe-4S] clusters.</text>
</comment>
<comment type="induction">
    <text evidence="3 4">Induced under anaerobic and microaerobic conditions (PubMed:30885932, PubMed:8955321). This control is mediated by Fnr, NarX, NarQ and NarL (PubMed:8955321). Expression is not reduced by the addition of respiratory electron acceptors, including nitrate, under anaerobic conditions (PubMed:30885932).</text>
</comment>
<comment type="domain">
    <text evidence="7">Contains an N-terminal 4Fe-4S dicluster domain and a C-terminal pyridine nucleotide-disulfide oxidoreductase domain.</text>
</comment>
<comment type="disruption phenotype">
    <text evidence="4">Under aerobic and anaerobic conditions, the disruption mutant is able to grow utilizing ammonium, L-alanine, L-arginine, L-glutamic acid, glycine, or DL-serine as the sole nitrogen source.</text>
</comment>
<comment type="sequence caution" evidence="6">
    <conflict type="frameshift">
        <sequence resource="EMBL-CDS" id="AAB46944"/>
    </conflict>
</comment>
<protein>
    <recommendedName>
        <fullName evidence="6">Putative oxidoreductase AegA</fullName>
    </recommendedName>
    <alternativeName>
        <fullName evidence="5">Anaerobically expressed gene A</fullName>
    </alternativeName>
</protein>
<organism>
    <name type="scientific">Escherichia coli (strain K12)</name>
    <dbReference type="NCBI Taxonomy" id="83333"/>
    <lineage>
        <taxon>Bacteria</taxon>
        <taxon>Pseudomonadati</taxon>
        <taxon>Pseudomonadota</taxon>
        <taxon>Gammaproteobacteria</taxon>
        <taxon>Enterobacterales</taxon>
        <taxon>Enterobacteriaceae</taxon>
        <taxon>Escherichia</taxon>
    </lineage>
</organism>
<keyword id="KW-0004">4Fe-4S</keyword>
<keyword id="KW-0408">Iron</keyword>
<keyword id="KW-0411">Iron-sulfur</keyword>
<keyword id="KW-0479">Metal-binding</keyword>
<keyword id="KW-0560">Oxidoreductase</keyword>
<keyword id="KW-1185">Reference proteome</keyword>
<keyword id="KW-0677">Repeat</keyword>
<evidence type="ECO:0000250" key="1">
    <source>
        <dbReference type="UniProtKB" id="P0AAJ3"/>
    </source>
</evidence>
<evidence type="ECO:0000255" key="2">
    <source>
        <dbReference type="PROSITE-ProRule" id="PRU00711"/>
    </source>
</evidence>
<evidence type="ECO:0000269" key="3">
    <source>
    </source>
</evidence>
<evidence type="ECO:0000269" key="4">
    <source>
    </source>
</evidence>
<evidence type="ECO:0000303" key="5">
    <source>
    </source>
</evidence>
<evidence type="ECO:0000305" key="6"/>
<evidence type="ECO:0000305" key="7">
    <source>
    </source>
</evidence>
<reference key="1">
    <citation type="journal article" date="1996" name="J. Bacteriol.">
        <title>Characterization of the aegA locus of Escherichia coli: control of gene expression in response to anaerobiosis and nitrate.</title>
        <authorList>
            <person name="Cavicchioli R."/>
            <person name="Kolesnikow T."/>
            <person name="Gunsalus R.P."/>
        </authorList>
    </citation>
    <scope>NUCLEOTIDE SEQUENCE [GENOMIC DNA]</scope>
    <scope>INDUCTION</scope>
    <scope>DISRUPTION PHENOTYPE</scope>
    <source>
        <strain>K12 / MC4100 / ATCC 35695 / DSM 6574</strain>
    </source>
</reference>
<reference key="2">
    <citation type="journal article" date="1997" name="DNA Res.">
        <title>Construction of a contiguous 874-kb sequence of the Escherichia coli-K12 genome corresponding to 50.0-68.8 min on the linkage map and analysis of its sequence features.</title>
        <authorList>
            <person name="Yamamoto Y."/>
            <person name="Aiba H."/>
            <person name="Baba T."/>
            <person name="Hayashi K."/>
            <person name="Inada T."/>
            <person name="Isono K."/>
            <person name="Itoh T."/>
            <person name="Kimura S."/>
            <person name="Kitagawa M."/>
            <person name="Makino K."/>
            <person name="Miki T."/>
            <person name="Mitsuhashi N."/>
            <person name="Mizobuchi K."/>
            <person name="Mori H."/>
            <person name="Nakade S."/>
            <person name="Nakamura Y."/>
            <person name="Nashimoto H."/>
            <person name="Oshima T."/>
            <person name="Oyama S."/>
            <person name="Saito N."/>
            <person name="Sampei G."/>
            <person name="Satoh Y."/>
            <person name="Sivasundaram S."/>
            <person name="Tagami H."/>
            <person name="Takahashi H."/>
            <person name="Takeda J."/>
            <person name="Takemoto K."/>
            <person name="Uehara K."/>
            <person name="Wada C."/>
            <person name="Yamagata S."/>
            <person name="Horiuchi T."/>
        </authorList>
    </citation>
    <scope>NUCLEOTIDE SEQUENCE [LARGE SCALE GENOMIC DNA]</scope>
    <source>
        <strain>K12 / W3110 / ATCC 27325 / DSM 5911</strain>
    </source>
</reference>
<reference key="3">
    <citation type="journal article" date="1997" name="Science">
        <title>The complete genome sequence of Escherichia coli K-12.</title>
        <authorList>
            <person name="Blattner F.R."/>
            <person name="Plunkett G. III"/>
            <person name="Bloch C.A."/>
            <person name="Perna N.T."/>
            <person name="Burland V."/>
            <person name="Riley M."/>
            <person name="Collado-Vides J."/>
            <person name="Glasner J.D."/>
            <person name="Rode C.K."/>
            <person name="Mayhew G.F."/>
            <person name="Gregor J."/>
            <person name="Davis N.W."/>
            <person name="Kirkpatrick H.A."/>
            <person name="Goeden M.A."/>
            <person name="Rose D.J."/>
            <person name="Mau B."/>
            <person name="Shao Y."/>
        </authorList>
    </citation>
    <scope>NUCLEOTIDE SEQUENCE [LARGE SCALE GENOMIC DNA]</scope>
    <source>
        <strain>K12 / MG1655 / ATCC 47076</strain>
    </source>
</reference>
<reference key="4">
    <citation type="journal article" date="2006" name="Mol. Syst. Biol.">
        <title>Highly accurate genome sequences of Escherichia coli K-12 strains MG1655 and W3110.</title>
        <authorList>
            <person name="Hayashi K."/>
            <person name="Morooka N."/>
            <person name="Yamamoto Y."/>
            <person name="Fujita K."/>
            <person name="Isono K."/>
            <person name="Choi S."/>
            <person name="Ohtsubo E."/>
            <person name="Baba T."/>
            <person name="Wanner B.L."/>
            <person name="Mori H."/>
            <person name="Horiuchi T."/>
        </authorList>
    </citation>
    <scope>NUCLEOTIDE SEQUENCE [LARGE SCALE GENOMIC DNA]</scope>
    <source>
        <strain>K12 / W3110 / ATCC 27325 / DSM 5911</strain>
    </source>
</reference>
<reference key="5">
    <citation type="journal article" date="2019" name="J. Bacteriol.">
        <title>Identification of a formate-dependent uric acid degradation pathway in Escherichia coli.</title>
        <authorList>
            <person name="Iwadate Y."/>
            <person name="Kato J.I."/>
        </authorList>
    </citation>
    <scope>FUNCTION</scope>
    <scope>INDUCTION</scope>
    <scope>DOMAIN</scope>
</reference>
<name>AEGA_ECOLI</name>
<proteinExistence type="evidence at transcript level"/>